<dbReference type="EMBL" id="AL513382">
    <property type="protein sequence ID" value="CAD08677.1"/>
    <property type="molecule type" value="Genomic_DNA"/>
</dbReference>
<dbReference type="EMBL" id="AE014613">
    <property type="protein sequence ID" value="AAO67950.1"/>
    <property type="molecule type" value="Genomic_DNA"/>
</dbReference>
<dbReference type="RefSeq" id="NP_454826.1">
    <property type="nucleotide sequence ID" value="NC_003198.1"/>
</dbReference>
<dbReference type="RefSeq" id="WP_000622423.1">
    <property type="nucleotide sequence ID" value="NZ_WSUR01000009.1"/>
</dbReference>
<dbReference type="SMR" id="P66739"/>
<dbReference type="STRING" id="220341.gene:17584275"/>
<dbReference type="KEGG" id="stt:t0220"/>
<dbReference type="KEGG" id="sty:STY0242"/>
<dbReference type="PATRIC" id="fig|220341.7.peg.242"/>
<dbReference type="eggNOG" id="COG0233">
    <property type="taxonomic scope" value="Bacteria"/>
</dbReference>
<dbReference type="HOGENOM" id="CLU_073981_2_1_6"/>
<dbReference type="OMA" id="FNPMNNG"/>
<dbReference type="OrthoDB" id="9804006at2"/>
<dbReference type="Proteomes" id="UP000000541">
    <property type="component" value="Chromosome"/>
</dbReference>
<dbReference type="Proteomes" id="UP000002670">
    <property type="component" value="Chromosome"/>
</dbReference>
<dbReference type="GO" id="GO:0005829">
    <property type="term" value="C:cytosol"/>
    <property type="evidence" value="ECO:0007669"/>
    <property type="project" value="GOC"/>
</dbReference>
<dbReference type="GO" id="GO:0043023">
    <property type="term" value="F:ribosomal large subunit binding"/>
    <property type="evidence" value="ECO:0007669"/>
    <property type="project" value="TreeGrafter"/>
</dbReference>
<dbReference type="GO" id="GO:0002184">
    <property type="term" value="P:cytoplasmic translational termination"/>
    <property type="evidence" value="ECO:0007669"/>
    <property type="project" value="TreeGrafter"/>
</dbReference>
<dbReference type="CDD" id="cd00520">
    <property type="entry name" value="RRF"/>
    <property type="match status" value="1"/>
</dbReference>
<dbReference type="FunFam" id="1.10.132.20:FF:000001">
    <property type="entry name" value="Ribosome-recycling factor"/>
    <property type="match status" value="1"/>
</dbReference>
<dbReference type="FunFam" id="3.30.1360.40:FF:000001">
    <property type="entry name" value="Ribosome-recycling factor"/>
    <property type="match status" value="1"/>
</dbReference>
<dbReference type="Gene3D" id="3.30.1360.40">
    <property type="match status" value="1"/>
</dbReference>
<dbReference type="Gene3D" id="1.10.132.20">
    <property type="entry name" value="Ribosome-recycling factor"/>
    <property type="match status" value="1"/>
</dbReference>
<dbReference type="HAMAP" id="MF_00040">
    <property type="entry name" value="RRF"/>
    <property type="match status" value="1"/>
</dbReference>
<dbReference type="InterPro" id="IPR002661">
    <property type="entry name" value="Ribosome_recyc_fac"/>
</dbReference>
<dbReference type="InterPro" id="IPR023584">
    <property type="entry name" value="Ribosome_recyc_fac_dom"/>
</dbReference>
<dbReference type="InterPro" id="IPR036191">
    <property type="entry name" value="RRF_sf"/>
</dbReference>
<dbReference type="NCBIfam" id="TIGR00496">
    <property type="entry name" value="frr"/>
    <property type="match status" value="1"/>
</dbReference>
<dbReference type="PANTHER" id="PTHR20982:SF3">
    <property type="entry name" value="MITOCHONDRIAL RIBOSOME RECYCLING FACTOR PSEUDO 1"/>
    <property type="match status" value="1"/>
</dbReference>
<dbReference type="PANTHER" id="PTHR20982">
    <property type="entry name" value="RIBOSOME RECYCLING FACTOR"/>
    <property type="match status" value="1"/>
</dbReference>
<dbReference type="Pfam" id="PF01765">
    <property type="entry name" value="RRF"/>
    <property type="match status" value="1"/>
</dbReference>
<dbReference type="SUPFAM" id="SSF55194">
    <property type="entry name" value="Ribosome recycling factor, RRF"/>
    <property type="match status" value="1"/>
</dbReference>
<proteinExistence type="inferred from homology"/>
<protein>
    <recommendedName>
        <fullName evidence="1">Ribosome-recycling factor</fullName>
        <shortName evidence="1">RRF</shortName>
    </recommendedName>
    <alternativeName>
        <fullName evidence="1">Ribosome-releasing factor</fullName>
    </alternativeName>
</protein>
<organism>
    <name type="scientific">Salmonella typhi</name>
    <dbReference type="NCBI Taxonomy" id="90370"/>
    <lineage>
        <taxon>Bacteria</taxon>
        <taxon>Pseudomonadati</taxon>
        <taxon>Pseudomonadota</taxon>
        <taxon>Gammaproteobacteria</taxon>
        <taxon>Enterobacterales</taxon>
        <taxon>Enterobacteriaceae</taxon>
        <taxon>Salmonella</taxon>
    </lineage>
</organism>
<reference key="1">
    <citation type="journal article" date="2001" name="Nature">
        <title>Complete genome sequence of a multiple drug resistant Salmonella enterica serovar Typhi CT18.</title>
        <authorList>
            <person name="Parkhill J."/>
            <person name="Dougan G."/>
            <person name="James K.D."/>
            <person name="Thomson N.R."/>
            <person name="Pickard D."/>
            <person name="Wain J."/>
            <person name="Churcher C.M."/>
            <person name="Mungall K.L."/>
            <person name="Bentley S.D."/>
            <person name="Holden M.T.G."/>
            <person name="Sebaihia M."/>
            <person name="Baker S."/>
            <person name="Basham D."/>
            <person name="Brooks K."/>
            <person name="Chillingworth T."/>
            <person name="Connerton P."/>
            <person name="Cronin A."/>
            <person name="Davis P."/>
            <person name="Davies R.M."/>
            <person name="Dowd L."/>
            <person name="White N."/>
            <person name="Farrar J."/>
            <person name="Feltwell T."/>
            <person name="Hamlin N."/>
            <person name="Haque A."/>
            <person name="Hien T.T."/>
            <person name="Holroyd S."/>
            <person name="Jagels K."/>
            <person name="Krogh A."/>
            <person name="Larsen T.S."/>
            <person name="Leather S."/>
            <person name="Moule S."/>
            <person name="O'Gaora P."/>
            <person name="Parry C."/>
            <person name="Quail M.A."/>
            <person name="Rutherford K.M."/>
            <person name="Simmonds M."/>
            <person name="Skelton J."/>
            <person name="Stevens K."/>
            <person name="Whitehead S."/>
            <person name="Barrell B.G."/>
        </authorList>
    </citation>
    <scope>NUCLEOTIDE SEQUENCE [LARGE SCALE GENOMIC DNA]</scope>
    <source>
        <strain>CT18</strain>
    </source>
</reference>
<reference key="2">
    <citation type="journal article" date="2003" name="J. Bacteriol.">
        <title>Comparative genomics of Salmonella enterica serovar Typhi strains Ty2 and CT18.</title>
        <authorList>
            <person name="Deng W."/>
            <person name="Liou S.-R."/>
            <person name="Plunkett G. III"/>
            <person name="Mayhew G.F."/>
            <person name="Rose D.J."/>
            <person name="Burland V."/>
            <person name="Kodoyianni V."/>
            <person name="Schwartz D.C."/>
            <person name="Blattner F.R."/>
        </authorList>
    </citation>
    <scope>NUCLEOTIDE SEQUENCE [LARGE SCALE GENOMIC DNA]</scope>
    <source>
        <strain>ATCC 700931 / Ty2</strain>
    </source>
</reference>
<name>RRF_SALTI</name>
<feature type="chain" id="PRO_0000167533" description="Ribosome-recycling factor">
    <location>
        <begin position="1"/>
        <end position="185"/>
    </location>
</feature>
<gene>
    <name evidence="1" type="primary">frr</name>
    <name type="synonym">rrf</name>
    <name type="ordered locus">STY0242</name>
    <name type="ordered locus">t0220</name>
</gene>
<keyword id="KW-0963">Cytoplasm</keyword>
<keyword id="KW-0648">Protein biosynthesis</keyword>
<accession>P66739</accession>
<accession>Q8XF57</accession>
<sequence length="185" mass="20556">MISDIRKDAEVRMEKCVEAFKTQISKVRTGRASPSLLDGIVVEYYGTPTPLRQLASVTVEDSRTLKINVFDRSMGPAVEKAIMASDLGLNPSSAGTDIRVPLPPLTEERRKDLTKIVRGEAEQARVAVRNVRRDANDKVKALLKDKAISEDDDRRSQEEVQKMTDAAIKKVDAALADKEAELMQF</sequence>
<evidence type="ECO:0000255" key="1">
    <source>
        <dbReference type="HAMAP-Rule" id="MF_00040"/>
    </source>
</evidence>
<comment type="function">
    <text evidence="1">Responsible for the release of ribosomes from messenger RNA at the termination of protein biosynthesis. May increase the efficiency of translation by recycling ribosomes from one round of translation to another.</text>
</comment>
<comment type="subcellular location">
    <subcellularLocation>
        <location evidence="1">Cytoplasm</location>
    </subcellularLocation>
</comment>
<comment type="similarity">
    <text evidence="1">Belongs to the RRF family.</text>
</comment>